<evidence type="ECO:0000255" key="1">
    <source>
        <dbReference type="HAMAP-Rule" id="MF_00075"/>
    </source>
</evidence>
<keyword id="KW-0963">Cytoplasm</keyword>
<keyword id="KW-0396">Initiation factor</keyword>
<keyword id="KW-0648">Protein biosynthesis</keyword>
<keyword id="KW-0694">RNA-binding</keyword>
<keyword id="KW-0699">rRNA-binding</keyword>
<feature type="chain" id="PRO_0000338802" description="Translation initiation factor IF-1">
    <location>
        <begin position="1"/>
        <end position="72"/>
    </location>
</feature>
<feature type="domain" description="S1-like" evidence="1">
    <location>
        <begin position="1"/>
        <end position="72"/>
    </location>
</feature>
<gene>
    <name evidence="1" type="primary">infA</name>
    <name type="ordered locus">Cbei_0175</name>
</gene>
<comment type="function">
    <text evidence="1">One of the essential components for the initiation of protein synthesis. Stabilizes the binding of IF-2 and IF-3 on the 30S subunit to which N-formylmethionyl-tRNA(fMet) subsequently binds. Helps modulate mRNA selection, yielding the 30S pre-initiation complex (PIC). Upon addition of the 50S ribosomal subunit IF-1, IF-2 and IF-3 are released leaving the mature 70S translation initiation complex.</text>
</comment>
<comment type="subunit">
    <text evidence="1">Component of the 30S ribosomal translation pre-initiation complex which assembles on the 30S ribosome in the order IF-2 and IF-3, IF-1 and N-formylmethionyl-tRNA(fMet); mRNA recruitment can occur at any time during PIC assembly.</text>
</comment>
<comment type="subcellular location">
    <subcellularLocation>
        <location evidence="1">Cytoplasm</location>
    </subcellularLocation>
</comment>
<comment type="similarity">
    <text evidence="1">Belongs to the IF-1 family.</text>
</comment>
<reference key="1">
    <citation type="submission" date="2007-06" db="EMBL/GenBank/DDBJ databases">
        <title>Complete sequence of Clostridium beijerinckii NCIMB 8052.</title>
        <authorList>
            <consortium name="US DOE Joint Genome Institute"/>
            <person name="Copeland A."/>
            <person name="Lucas S."/>
            <person name="Lapidus A."/>
            <person name="Barry K."/>
            <person name="Detter J.C."/>
            <person name="Glavina del Rio T."/>
            <person name="Hammon N."/>
            <person name="Israni S."/>
            <person name="Dalin E."/>
            <person name="Tice H."/>
            <person name="Pitluck S."/>
            <person name="Sims D."/>
            <person name="Brettin T."/>
            <person name="Bruce D."/>
            <person name="Tapia R."/>
            <person name="Brainard J."/>
            <person name="Schmutz J."/>
            <person name="Larimer F."/>
            <person name="Land M."/>
            <person name="Hauser L."/>
            <person name="Kyrpides N."/>
            <person name="Mikhailova N."/>
            <person name="Bennet G."/>
            <person name="Cann I."/>
            <person name="Chen J.-S."/>
            <person name="Contreras A.L."/>
            <person name="Jones D."/>
            <person name="Kashket E."/>
            <person name="Mitchell W."/>
            <person name="Stoddard S."/>
            <person name="Schwarz W."/>
            <person name="Qureshi N."/>
            <person name="Young M."/>
            <person name="Shi Z."/>
            <person name="Ezeji T."/>
            <person name="White B."/>
            <person name="Blaschek H."/>
            <person name="Richardson P."/>
        </authorList>
    </citation>
    <scope>NUCLEOTIDE SEQUENCE [LARGE SCALE GENOMIC DNA]</scope>
    <source>
        <strain>ATCC 51743 / NCIMB 8052</strain>
    </source>
</reference>
<proteinExistence type="inferred from homology"/>
<sequence>MSKDDVIEMQGTVLESLPNAMFQVELESGHKILAHISGKLRMNFIRILPGDKVTVELSPYDLTRGRITWRAK</sequence>
<protein>
    <recommendedName>
        <fullName evidence="1">Translation initiation factor IF-1</fullName>
    </recommendedName>
</protein>
<accession>A6LPT5</accession>
<organism>
    <name type="scientific">Clostridium beijerinckii (strain ATCC 51743 / NCIMB 8052)</name>
    <name type="common">Clostridium acetobutylicum</name>
    <dbReference type="NCBI Taxonomy" id="290402"/>
    <lineage>
        <taxon>Bacteria</taxon>
        <taxon>Bacillati</taxon>
        <taxon>Bacillota</taxon>
        <taxon>Clostridia</taxon>
        <taxon>Eubacteriales</taxon>
        <taxon>Clostridiaceae</taxon>
        <taxon>Clostridium</taxon>
    </lineage>
</organism>
<name>IF1_CLOB8</name>
<dbReference type="EMBL" id="CP000721">
    <property type="protein sequence ID" value="ABR32365.1"/>
    <property type="molecule type" value="Genomic_DNA"/>
</dbReference>
<dbReference type="RefSeq" id="WP_002582630.1">
    <property type="nucleotide sequence ID" value="NC_009617.1"/>
</dbReference>
<dbReference type="SMR" id="A6LPT5"/>
<dbReference type="GeneID" id="92945868"/>
<dbReference type="KEGG" id="cbe:Cbei_0175"/>
<dbReference type="eggNOG" id="COG0361">
    <property type="taxonomic scope" value="Bacteria"/>
</dbReference>
<dbReference type="HOGENOM" id="CLU_151267_1_0_9"/>
<dbReference type="Proteomes" id="UP000000565">
    <property type="component" value="Chromosome"/>
</dbReference>
<dbReference type="GO" id="GO:0005829">
    <property type="term" value="C:cytosol"/>
    <property type="evidence" value="ECO:0007669"/>
    <property type="project" value="TreeGrafter"/>
</dbReference>
<dbReference type="GO" id="GO:0043022">
    <property type="term" value="F:ribosome binding"/>
    <property type="evidence" value="ECO:0007669"/>
    <property type="project" value="UniProtKB-UniRule"/>
</dbReference>
<dbReference type="GO" id="GO:0019843">
    <property type="term" value="F:rRNA binding"/>
    <property type="evidence" value="ECO:0007669"/>
    <property type="project" value="UniProtKB-UniRule"/>
</dbReference>
<dbReference type="GO" id="GO:0003743">
    <property type="term" value="F:translation initiation factor activity"/>
    <property type="evidence" value="ECO:0007669"/>
    <property type="project" value="UniProtKB-UniRule"/>
</dbReference>
<dbReference type="CDD" id="cd04451">
    <property type="entry name" value="S1_IF1"/>
    <property type="match status" value="1"/>
</dbReference>
<dbReference type="FunFam" id="2.40.50.140:FF:000002">
    <property type="entry name" value="Translation initiation factor IF-1"/>
    <property type="match status" value="1"/>
</dbReference>
<dbReference type="Gene3D" id="2.40.50.140">
    <property type="entry name" value="Nucleic acid-binding proteins"/>
    <property type="match status" value="1"/>
</dbReference>
<dbReference type="HAMAP" id="MF_00075">
    <property type="entry name" value="IF_1"/>
    <property type="match status" value="1"/>
</dbReference>
<dbReference type="InterPro" id="IPR012340">
    <property type="entry name" value="NA-bd_OB-fold"/>
</dbReference>
<dbReference type="InterPro" id="IPR006196">
    <property type="entry name" value="RNA-binding_domain_S1_IF1"/>
</dbReference>
<dbReference type="InterPro" id="IPR003029">
    <property type="entry name" value="S1_domain"/>
</dbReference>
<dbReference type="InterPro" id="IPR004368">
    <property type="entry name" value="TIF_IF1"/>
</dbReference>
<dbReference type="NCBIfam" id="TIGR00008">
    <property type="entry name" value="infA"/>
    <property type="match status" value="1"/>
</dbReference>
<dbReference type="PANTHER" id="PTHR33370">
    <property type="entry name" value="TRANSLATION INITIATION FACTOR IF-1, CHLOROPLASTIC"/>
    <property type="match status" value="1"/>
</dbReference>
<dbReference type="PANTHER" id="PTHR33370:SF1">
    <property type="entry name" value="TRANSLATION INITIATION FACTOR IF-1, CHLOROPLASTIC"/>
    <property type="match status" value="1"/>
</dbReference>
<dbReference type="Pfam" id="PF01176">
    <property type="entry name" value="eIF-1a"/>
    <property type="match status" value="1"/>
</dbReference>
<dbReference type="SMART" id="SM00316">
    <property type="entry name" value="S1"/>
    <property type="match status" value="1"/>
</dbReference>
<dbReference type="SUPFAM" id="SSF50249">
    <property type="entry name" value="Nucleic acid-binding proteins"/>
    <property type="match status" value="1"/>
</dbReference>
<dbReference type="PROSITE" id="PS50832">
    <property type="entry name" value="S1_IF1_TYPE"/>
    <property type="match status" value="1"/>
</dbReference>